<feature type="chain" id="PRO_1000136593" description="UPF0259 membrane protein YciC">
    <location>
        <begin position="1"/>
        <end position="247"/>
    </location>
</feature>
<feature type="transmembrane region" description="Helical" evidence="1">
    <location>
        <begin position="20"/>
        <end position="40"/>
    </location>
</feature>
<feature type="transmembrane region" description="Helical" evidence="1">
    <location>
        <begin position="87"/>
        <end position="107"/>
    </location>
</feature>
<feature type="transmembrane region" description="Helical" evidence="1">
    <location>
        <begin position="118"/>
        <end position="140"/>
    </location>
</feature>
<feature type="transmembrane region" description="Helical" evidence="1">
    <location>
        <begin position="152"/>
        <end position="172"/>
    </location>
</feature>
<feature type="transmembrane region" description="Helical" evidence="1">
    <location>
        <begin position="194"/>
        <end position="214"/>
    </location>
</feature>
<feature type="transmembrane region" description="Helical" evidence="1">
    <location>
        <begin position="219"/>
        <end position="239"/>
    </location>
</feature>
<comment type="subcellular location">
    <subcellularLocation>
        <location evidence="1">Cell inner membrane</location>
        <topology evidence="1">Multi-pass membrane protein</topology>
    </subcellularLocation>
</comment>
<comment type="similarity">
    <text evidence="1">Belongs to the UPF0259 family.</text>
</comment>
<protein>
    <recommendedName>
        <fullName evidence="1">UPF0259 membrane protein YciC</fullName>
    </recommendedName>
</protein>
<sequence>MSITAKSVYRDAGNFFRNQFITILLVSLLCAFITVVLGHAFSPSDAQIAQLSEGEHLAGSAGLFELVQNMTPEQQQILLRASAASTFSGLIGNAILAGGIILMIQLVSAGHRVSALRAIGASAPALPKLFILIFLTTLLVQIGIMLIVVPGIIMAIVLALAPVMLVEEKMGVFAAMRSSMRLAWANMRLVAPAVIGWLLAKTLLLLFAPSFAVLTPNVGAVLANTLSNLISAVLLIYLFRLYMLIRQ</sequence>
<keyword id="KW-0997">Cell inner membrane</keyword>
<keyword id="KW-1003">Cell membrane</keyword>
<keyword id="KW-0472">Membrane</keyword>
<keyword id="KW-0812">Transmembrane</keyword>
<keyword id="KW-1133">Transmembrane helix</keyword>
<reference key="1">
    <citation type="journal article" date="2011" name="J. Bacteriol.">
        <title>Comparative genomics of 28 Salmonella enterica isolates: evidence for CRISPR-mediated adaptive sublineage evolution.</title>
        <authorList>
            <person name="Fricke W.F."/>
            <person name="Mammel M.K."/>
            <person name="McDermott P.F."/>
            <person name="Tartera C."/>
            <person name="White D.G."/>
            <person name="Leclerc J.E."/>
            <person name="Ravel J."/>
            <person name="Cebula T.A."/>
        </authorList>
    </citation>
    <scope>NUCLEOTIDE SEQUENCE [LARGE SCALE GENOMIC DNA]</scope>
    <source>
        <strain>SL254</strain>
    </source>
</reference>
<dbReference type="EMBL" id="CP001113">
    <property type="protein sequence ID" value="ACF65628.1"/>
    <property type="molecule type" value="Genomic_DNA"/>
</dbReference>
<dbReference type="RefSeq" id="WP_000028507.1">
    <property type="nucleotide sequence ID" value="NZ_CCMR01000003.1"/>
</dbReference>
<dbReference type="KEGG" id="see:SNSL254_A1861"/>
<dbReference type="HOGENOM" id="CLU_073287_0_0_6"/>
<dbReference type="Proteomes" id="UP000008824">
    <property type="component" value="Chromosome"/>
</dbReference>
<dbReference type="GO" id="GO:0005886">
    <property type="term" value="C:plasma membrane"/>
    <property type="evidence" value="ECO:0007669"/>
    <property type="project" value="UniProtKB-SubCell"/>
</dbReference>
<dbReference type="HAMAP" id="MF_01067">
    <property type="entry name" value="UPF0259"/>
    <property type="match status" value="1"/>
</dbReference>
<dbReference type="InterPro" id="IPR009627">
    <property type="entry name" value="UPF0259"/>
</dbReference>
<dbReference type="NCBIfam" id="NF002774">
    <property type="entry name" value="PRK02868.1"/>
    <property type="match status" value="1"/>
</dbReference>
<dbReference type="Pfam" id="PF06790">
    <property type="entry name" value="UPF0259"/>
    <property type="match status" value="1"/>
</dbReference>
<gene>
    <name evidence="1" type="primary">yciC</name>
    <name type="ordered locus">SNSL254_A1861</name>
</gene>
<name>YCIC_SALNS</name>
<proteinExistence type="inferred from homology"/>
<evidence type="ECO:0000255" key="1">
    <source>
        <dbReference type="HAMAP-Rule" id="MF_01067"/>
    </source>
</evidence>
<organism>
    <name type="scientific">Salmonella newport (strain SL254)</name>
    <dbReference type="NCBI Taxonomy" id="423368"/>
    <lineage>
        <taxon>Bacteria</taxon>
        <taxon>Pseudomonadati</taxon>
        <taxon>Pseudomonadota</taxon>
        <taxon>Gammaproteobacteria</taxon>
        <taxon>Enterobacterales</taxon>
        <taxon>Enterobacteriaceae</taxon>
        <taxon>Salmonella</taxon>
    </lineage>
</organism>
<accession>B4SUC3</accession>